<evidence type="ECO:0000255" key="1">
    <source>
        <dbReference type="HAMAP-Rule" id="MF_00019"/>
    </source>
</evidence>
<evidence type="ECO:0000256" key="2">
    <source>
        <dbReference type="SAM" id="MobiDB-lite"/>
    </source>
</evidence>
<proteinExistence type="inferred from homology"/>
<organism>
    <name type="scientific">Acidiphilium cryptum (strain JF-5)</name>
    <dbReference type="NCBI Taxonomy" id="349163"/>
    <lineage>
        <taxon>Bacteria</taxon>
        <taxon>Pseudomonadati</taxon>
        <taxon>Pseudomonadota</taxon>
        <taxon>Alphaproteobacteria</taxon>
        <taxon>Acetobacterales</taxon>
        <taxon>Acidocellaceae</taxon>
        <taxon>Acidiphilium</taxon>
    </lineage>
</organism>
<reference key="1">
    <citation type="submission" date="2007-05" db="EMBL/GenBank/DDBJ databases">
        <title>Complete sequence of chromosome of Acidiphilium cryptum JF-5.</title>
        <authorList>
            <consortium name="US DOE Joint Genome Institute"/>
            <person name="Copeland A."/>
            <person name="Lucas S."/>
            <person name="Lapidus A."/>
            <person name="Barry K."/>
            <person name="Detter J.C."/>
            <person name="Glavina del Rio T."/>
            <person name="Hammon N."/>
            <person name="Israni S."/>
            <person name="Dalin E."/>
            <person name="Tice H."/>
            <person name="Pitluck S."/>
            <person name="Sims D."/>
            <person name="Brettin T."/>
            <person name="Bruce D."/>
            <person name="Han C."/>
            <person name="Schmutz J."/>
            <person name="Larimer F."/>
            <person name="Land M."/>
            <person name="Hauser L."/>
            <person name="Kyrpides N."/>
            <person name="Kim E."/>
            <person name="Magnuson T."/>
            <person name="Richardson P."/>
        </authorList>
    </citation>
    <scope>NUCLEOTIDE SEQUENCE [LARGE SCALE GENOMIC DNA]</scope>
    <source>
        <strain>JF-5</strain>
    </source>
</reference>
<keyword id="KW-0963">Cytoplasm</keyword>
<keyword id="KW-0444">Lipid biosynthesis</keyword>
<keyword id="KW-0443">Lipid metabolism</keyword>
<keyword id="KW-0594">Phospholipid biosynthesis</keyword>
<keyword id="KW-1208">Phospholipid metabolism</keyword>
<keyword id="KW-1185">Reference proteome</keyword>
<keyword id="KW-0808">Transferase</keyword>
<dbReference type="EC" id="2.3.1.274" evidence="1"/>
<dbReference type="EMBL" id="CP000697">
    <property type="protein sequence ID" value="ABQ29498.1"/>
    <property type="molecule type" value="Genomic_DNA"/>
</dbReference>
<dbReference type="SMR" id="A5FV66"/>
<dbReference type="STRING" id="349163.Acry_0270"/>
<dbReference type="KEGG" id="acr:Acry_0270"/>
<dbReference type="eggNOG" id="COG0416">
    <property type="taxonomic scope" value="Bacteria"/>
</dbReference>
<dbReference type="HOGENOM" id="CLU_039379_1_0_5"/>
<dbReference type="UniPathway" id="UPA00085"/>
<dbReference type="Proteomes" id="UP000000245">
    <property type="component" value="Chromosome"/>
</dbReference>
<dbReference type="GO" id="GO:0005737">
    <property type="term" value="C:cytoplasm"/>
    <property type="evidence" value="ECO:0007669"/>
    <property type="project" value="UniProtKB-SubCell"/>
</dbReference>
<dbReference type="GO" id="GO:0043811">
    <property type="term" value="F:phosphate:acyl-[acyl carrier protein] acyltransferase activity"/>
    <property type="evidence" value="ECO:0007669"/>
    <property type="project" value="UniProtKB-UniRule"/>
</dbReference>
<dbReference type="GO" id="GO:0006633">
    <property type="term" value="P:fatty acid biosynthetic process"/>
    <property type="evidence" value="ECO:0007669"/>
    <property type="project" value="UniProtKB-UniRule"/>
</dbReference>
<dbReference type="GO" id="GO:0008654">
    <property type="term" value="P:phospholipid biosynthetic process"/>
    <property type="evidence" value="ECO:0007669"/>
    <property type="project" value="UniProtKB-KW"/>
</dbReference>
<dbReference type="Gene3D" id="3.40.718.10">
    <property type="entry name" value="Isopropylmalate Dehydrogenase"/>
    <property type="match status" value="1"/>
</dbReference>
<dbReference type="HAMAP" id="MF_00019">
    <property type="entry name" value="PlsX"/>
    <property type="match status" value="1"/>
</dbReference>
<dbReference type="InterPro" id="IPR003664">
    <property type="entry name" value="FA_synthesis"/>
</dbReference>
<dbReference type="InterPro" id="IPR012281">
    <property type="entry name" value="Phospholipid_synth_PlsX-like"/>
</dbReference>
<dbReference type="NCBIfam" id="TIGR00182">
    <property type="entry name" value="plsX"/>
    <property type="match status" value="1"/>
</dbReference>
<dbReference type="PANTHER" id="PTHR30100">
    <property type="entry name" value="FATTY ACID/PHOSPHOLIPID SYNTHESIS PROTEIN PLSX"/>
    <property type="match status" value="1"/>
</dbReference>
<dbReference type="PANTHER" id="PTHR30100:SF1">
    <property type="entry name" value="PHOSPHATE ACYLTRANSFERASE"/>
    <property type="match status" value="1"/>
</dbReference>
<dbReference type="Pfam" id="PF02504">
    <property type="entry name" value="FA_synthesis"/>
    <property type="match status" value="1"/>
</dbReference>
<dbReference type="PIRSF" id="PIRSF002465">
    <property type="entry name" value="Phsphlp_syn_PlsX"/>
    <property type="match status" value="1"/>
</dbReference>
<dbReference type="SUPFAM" id="SSF53659">
    <property type="entry name" value="Isocitrate/Isopropylmalate dehydrogenase-like"/>
    <property type="match status" value="1"/>
</dbReference>
<sequence>MPSPPPTPETATASDRTATPAPGMPILAVDAMGGDSAPGMVIAGLDIAAERHPNARFEVFGDAVQIDELVRLSKRLRNRVSIRPTTEIIPNELKPTAALRLRDASLRRAIDAVANGEAAGVISAGNTGAMLALAKIVLKTMSGIDRPAMAAIGPSARGDVVMLDLGANVVCDARNLVEFAVMGELFARTVLGLPHPTIGLLNVGSEEMKGDETLRRAAEALRESPIGPQFRGFIEGHDIAGGTVDVVVTDGFTGNVALKTGEGALRLVGDLLRRVFSANIASRLAYLLARPGLTRLREWLDPRRYNGAVLLGLNGVVVKSHGGADAEGFAHAVDVAMDMIVNRFNDRIRDDLGRHADRERLASDAFRATPPASATSVTTG</sequence>
<protein>
    <recommendedName>
        <fullName evidence="1">Phosphate acyltransferase</fullName>
        <ecNumber evidence="1">2.3.1.274</ecNumber>
    </recommendedName>
    <alternativeName>
        <fullName evidence="1">Acyl-ACP phosphotransacylase</fullName>
    </alternativeName>
    <alternativeName>
        <fullName evidence="1">Acyl-[acyl-carrier-protein]--phosphate acyltransferase</fullName>
    </alternativeName>
    <alternativeName>
        <fullName evidence="1">Phosphate-acyl-ACP acyltransferase</fullName>
    </alternativeName>
</protein>
<gene>
    <name evidence="1" type="primary">plsX</name>
    <name type="ordered locus">Acry_0270</name>
</gene>
<accession>A5FV66</accession>
<comment type="function">
    <text evidence="1">Catalyzes the reversible formation of acyl-phosphate (acyl-PO(4)) from acyl-[acyl-carrier-protein] (acyl-ACP). This enzyme utilizes acyl-ACP as fatty acyl donor, but not acyl-CoA.</text>
</comment>
<comment type="catalytic activity">
    <reaction evidence="1">
        <text>a fatty acyl-[ACP] + phosphate = an acyl phosphate + holo-[ACP]</text>
        <dbReference type="Rhea" id="RHEA:42292"/>
        <dbReference type="Rhea" id="RHEA-COMP:9685"/>
        <dbReference type="Rhea" id="RHEA-COMP:14125"/>
        <dbReference type="ChEBI" id="CHEBI:43474"/>
        <dbReference type="ChEBI" id="CHEBI:59918"/>
        <dbReference type="ChEBI" id="CHEBI:64479"/>
        <dbReference type="ChEBI" id="CHEBI:138651"/>
        <dbReference type="EC" id="2.3.1.274"/>
    </reaction>
</comment>
<comment type="pathway">
    <text evidence="1">Lipid metabolism; phospholipid metabolism.</text>
</comment>
<comment type="subunit">
    <text evidence="1">Homodimer. Probably interacts with PlsY.</text>
</comment>
<comment type="subcellular location">
    <subcellularLocation>
        <location evidence="1">Cytoplasm</location>
    </subcellularLocation>
    <text evidence="1">Associated with the membrane possibly through PlsY.</text>
</comment>
<comment type="similarity">
    <text evidence="1">Belongs to the PlsX family.</text>
</comment>
<name>PLSX_ACICJ</name>
<feature type="chain" id="PRO_0000329204" description="Phosphate acyltransferase">
    <location>
        <begin position="1"/>
        <end position="380"/>
    </location>
</feature>
<feature type="region of interest" description="Disordered" evidence="2">
    <location>
        <begin position="1"/>
        <end position="23"/>
    </location>
</feature>